<name>SKP1_XENLA</name>
<organism>
    <name type="scientific">Xenopus laevis</name>
    <name type="common">African clawed frog</name>
    <dbReference type="NCBI Taxonomy" id="8355"/>
    <lineage>
        <taxon>Eukaryota</taxon>
        <taxon>Metazoa</taxon>
        <taxon>Chordata</taxon>
        <taxon>Craniata</taxon>
        <taxon>Vertebrata</taxon>
        <taxon>Euteleostomi</taxon>
        <taxon>Amphibia</taxon>
        <taxon>Batrachia</taxon>
        <taxon>Anura</taxon>
        <taxon>Pipoidea</taxon>
        <taxon>Pipidae</taxon>
        <taxon>Xenopodinae</taxon>
        <taxon>Xenopus</taxon>
        <taxon>Xenopus</taxon>
    </lineage>
</organism>
<sequence length="163" mass="18658">MPSIKLQSSDGEIFEVDVEIAKQSVTIKTMLEDLGMDDEGDDDPVPLPNVNAAILKKVIQWCTHHKDDPPPPEDDENKEKRTDDIPVWDQEFLKVDQGTLFELILAANYLDIKGLLDVTCKTVANMIKGKTPEEIRKTFNIKNDFTEEEEAQVRKENQWCEEK</sequence>
<dbReference type="EMBL" id="AF176352">
    <property type="protein sequence ID" value="AAF14553.1"/>
    <property type="molecule type" value="mRNA"/>
</dbReference>
<dbReference type="EMBL" id="AF169342">
    <property type="protein sequence ID" value="AAF65619.1"/>
    <property type="molecule type" value="mRNA"/>
</dbReference>
<dbReference type="EMBL" id="BC054184">
    <property type="protein sequence ID" value="AAH54184.1"/>
    <property type="molecule type" value="mRNA"/>
</dbReference>
<dbReference type="RefSeq" id="NP_001080844.1">
    <property type="nucleotide sequence ID" value="NM_001087375.1"/>
</dbReference>
<dbReference type="RefSeq" id="XP_018110404.1">
    <property type="nucleotide sequence ID" value="XM_018254915.1"/>
</dbReference>
<dbReference type="SMR" id="Q71U00"/>
<dbReference type="BioGRID" id="98780">
    <property type="interactions" value="4"/>
</dbReference>
<dbReference type="IntAct" id="Q71U00">
    <property type="interactions" value="2"/>
</dbReference>
<dbReference type="DNASU" id="380538"/>
<dbReference type="GeneID" id="108712619"/>
<dbReference type="GeneID" id="380538"/>
<dbReference type="KEGG" id="xla:108712619"/>
<dbReference type="AGR" id="Xenbase:XB-GENE-919643"/>
<dbReference type="CTD" id="108712619"/>
<dbReference type="CTD" id="380538"/>
<dbReference type="Xenbase" id="XB-GENE-919643">
    <property type="gene designation" value="skp1.L"/>
</dbReference>
<dbReference type="OrthoDB" id="2342932at2759"/>
<dbReference type="UniPathway" id="UPA00143"/>
<dbReference type="Proteomes" id="UP000186698">
    <property type="component" value="Chromosome 3S"/>
</dbReference>
<dbReference type="Bgee" id="108712619">
    <property type="expression patterns" value="Expressed in gastrula and 19 other cell types or tissues"/>
</dbReference>
<dbReference type="GO" id="GO:0031467">
    <property type="term" value="C:Cul7-RING ubiquitin ligase complex"/>
    <property type="evidence" value="ECO:0000250"/>
    <property type="project" value="UniProtKB"/>
</dbReference>
<dbReference type="GO" id="GO:0005737">
    <property type="term" value="C:cytoplasm"/>
    <property type="evidence" value="ECO:0000318"/>
    <property type="project" value="GO_Central"/>
</dbReference>
<dbReference type="GO" id="GO:0005634">
    <property type="term" value="C:nucleus"/>
    <property type="evidence" value="ECO:0000318"/>
    <property type="project" value="GO_Central"/>
</dbReference>
<dbReference type="GO" id="GO:0019005">
    <property type="term" value="C:SCF ubiquitin ligase complex"/>
    <property type="evidence" value="ECO:0000250"/>
    <property type="project" value="UniProtKB"/>
</dbReference>
<dbReference type="GO" id="GO:0097602">
    <property type="term" value="F:cullin family protein binding"/>
    <property type="evidence" value="ECO:0000318"/>
    <property type="project" value="GO_Central"/>
</dbReference>
<dbReference type="GO" id="GO:0016567">
    <property type="term" value="P:protein ubiquitination"/>
    <property type="evidence" value="ECO:0007669"/>
    <property type="project" value="UniProtKB-UniPathway"/>
</dbReference>
<dbReference type="GO" id="GO:0031146">
    <property type="term" value="P:SCF-dependent proteasomal ubiquitin-dependent protein catabolic process"/>
    <property type="evidence" value="ECO:0000318"/>
    <property type="project" value="GO_Central"/>
</dbReference>
<dbReference type="CDD" id="cd18322">
    <property type="entry name" value="BTB_POZ_SKP1"/>
    <property type="match status" value="1"/>
</dbReference>
<dbReference type="FunFam" id="3.30.710.10:FF:000270">
    <property type="entry name" value="S-phase kinase-associated protein 1"/>
    <property type="match status" value="1"/>
</dbReference>
<dbReference type="Gene3D" id="3.30.710.10">
    <property type="entry name" value="Potassium Channel Kv1.1, Chain A"/>
    <property type="match status" value="1"/>
</dbReference>
<dbReference type="InterPro" id="IPR016897">
    <property type="entry name" value="SKP1"/>
</dbReference>
<dbReference type="InterPro" id="IPR001232">
    <property type="entry name" value="SKP1-like"/>
</dbReference>
<dbReference type="InterPro" id="IPR036296">
    <property type="entry name" value="SKP1-like_dim_sf"/>
</dbReference>
<dbReference type="InterPro" id="IPR011333">
    <property type="entry name" value="SKP1/BTB/POZ_sf"/>
</dbReference>
<dbReference type="InterPro" id="IPR016072">
    <property type="entry name" value="Skp1_comp_dimer"/>
</dbReference>
<dbReference type="InterPro" id="IPR016073">
    <property type="entry name" value="Skp1_comp_POZ"/>
</dbReference>
<dbReference type="PANTHER" id="PTHR11165">
    <property type="entry name" value="SKP1"/>
    <property type="match status" value="1"/>
</dbReference>
<dbReference type="Pfam" id="PF01466">
    <property type="entry name" value="Skp1"/>
    <property type="match status" value="1"/>
</dbReference>
<dbReference type="Pfam" id="PF03931">
    <property type="entry name" value="Skp1_POZ"/>
    <property type="match status" value="1"/>
</dbReference>
<dbReference type="PIRSF" id="PIRSF028729">
    <property type="entry name" value="E3_ubiquit_lig_SCF_Skp"/>
    <property type="match status" value="1"/>
</dbReference>
<dbReference type="SMART" id="SM00512">
    <property type="entry name" value="Skp1"/>
    <property type="match status" value="1"/>
</dbReference>
<dbReference type="SUPFAM" id="SSF54695">
    <property type="entry name" value="POZ domain"/>
    <property type="match status" value="1"/>
</dbReference>
<dbReference type="SUPFAM" id="SSF81382">
    <property type="entry name" value="Skp1 dimerisation domain-like"/>
    <property type="match status" value="1"/>
</dbReference>
<reference key="1">
    <citation type="journal article" date="1999" name="Curr. Biol.">
        <title>Identification of novel F-box proteins in Xenopus laevis.</title>
        <authorList>
            <person name="Regan-Reimann J.D."/>
            <person name="Duong Q.V."/>
            <person name="Jackson P.K."/>
        </authorList>
    </citation>
    <scope>NUCLEOTIDE SEQUENCE [MRNA]</scope>
    <scope>POSSIBLE INTERACTION WITH MTUS1; FBX28; FBXO43; FBL5 AND FBL13</scope>
    <source>
        <tissue>Oocyte</tissue>
    </source>
</reference>
<reference key="2">
    <citation type="submission" date="1999-07" db="EMBL/GenBank/DDBJ databases">
        <title>Xenopus translin is present in a Skp1 complex.</title>
        <authorList>
            <person name="Lorca T."/>
            <person name="Castro A."/>
            <person name="Labbe J.-C."/>
        </authorList>
    </citation>
    <scope>NUCLEOTIDE SEQUENCE [MRNA]</scope>
</reference>
<reference key="3">
    <citation type="submission" date="2003-06" db="EMBL/GenBank/DDBJ databases">
        <authorList>
            <consortium name="NIH - Xenopus Gene Collection (XGC) project"/>
        </authorList>
    </citation>
    <scope>NUCLEOTIDE SEQUENCE [LARGE SCALE MRNA]</scope>
</reference>
<reference key="4">
    <citation type="journal article" date="2003" name="Dev. Cell">
        <title>An inner centromere protein that stimulates the microtubule depolymerizing activity of a KinI kinesin.</title>
        <authorList>
            <person name="Ohi R."/>
            <person name="Coughlin M.L."/>
            <person name="Lane W.S."/>
            <person name="Mitchison T.J."/>
        </authorList>
    </citation>
    <scope>INTERACTION WITH MTUS1</scope>
    <scope>IDENTIFICATION BY MASS SPECTROMETRY</scope>
</reference>
<feature type="initiator methionine" description="Removed" evidence="1">
    <location>
        <position position="1"/>
    </location>
</feature>
<feature type="chain" id="PRO_0000187254" description="S-phase kinase-associated protein 1">
    <location>
        <begin position="2"/>
        <end position="163"/>
    </location>
</feature>
<feature type="region of interest" description="Disordered" evidence="2">
    <location>
        <begin position="63"/>
        <end position="83"/>
    </location>
</feature>
<feature type="region of interest" description="Interaction with the F-box domain of F-box proteins" evidence="1">
    <location>
        <begin position="104"/>
        <end position="163"/>
    </location>
</feature>
<accession>Q71U00</accession>
<protein>
    <recommendedName>
        <fullName>S-phase kinase-associated protein 1</fullName>
    </recommendedName>
    <alternativeName>
        <fullName>Cyclin-A/CDK2-associated protein p19</fullName>
    </alternativeName>
    <alternativeName>
        <fullName>S-phase kinase-associated protein 1A</fullName>
    </alternativeName>
    <alternativeName>
        <fullName>p19A</fullName>
    </alternativeName>
    <alternativeName>
        <fullName>p19skp1</fullName>
    </alternativeName>
</protein>
<keyword id="KW-1185">Reference proteome</keyword>
<keyword id="KW-0833">Ubl conjugation pathway</keyword>
<evidence type="ECO:0000250" key="1"/>
<evidence type="ECO:0000256" key="2">
    <source>
        <dbReference type="SAM" id="MobiDB-lite"/>
    </source>
</evidence>
<evidence type="ECO:0000269" key="3">
    <source>
    </source>
</evidence>
<evidence type="ECO:0000305" key="4"/>
<proteinExistence type="evidence at protein level"/>
<gene>
    <name type="primary">skp1</name>
    <name type="synonym">skp1a</name>
</gene>
<comment type="function">
    <text evidence="1">Essential component of the SCF (SKP1-CUL1-F-box protein) ubiquitin ligase complex, which mediates the ubiquitination of proteins involved in cell cycle progression, signal transduction and transcription. In the SCF complex, serves as an adapter that links the F-box protein to CUL1 (By similarity).</text>
</comment>
<comment type="pathway">
    <text>Protein modification; protein ubiquitination.</text>
</comment>
<comment type="subunit">
    <text evidence="1 3">Interacts directly with CUL1 and F-box proteins, such as BTRC and SKP2, in the SCF complex (By similarity). Interacts with mtus1. May interact with fbx28, fbxo43, fbl5 and fbl13.</text>
</comment>
<comment type="similarity">
    <text evidence="4">Belongs to the SKP1 family.</text>
</comment>